<protein>
    <recommendedName>
        <fullName>Yop proteins translocation protein K</fullName>
    </recommendedName>
    <alternativeName>
        <fullName>Low calcium response locus protein KB</fullName>
    </alternativeName>
</protein>
<accession>P69975</accession>
<accession>Q00927</accession>
<accession>Q663H9</accession>
<dbReference type="EMBL" id="M83986">
    <property type="protein sequence ID" value="AAA27652.1"/>
    <property type="molecule type" value="Genomic_DNA"/>
</dbReference>
<dbReference type="EMBL" id="BX936399">
    <property type="protein sequence ID" value="CAF25430.1"/>
    <property type="status" value="ALT_INIT"/>
    <property type="molecule type" value="Genomic_DNA"/>
</dbReference>
<dbReference type="RefSeq" id="WP_002361471.1">
    <property type="nucleotide sequence ID" value="NZ_CP009711.1"/>
</dbReference>
<dbReference type="SMR" id="P69975"/>
<dbReference type="KEGG" id="yps:pYV0087"/>
<dbReference type="Proteomes" id="UP000001011">
    <property type="component" value="Plasmid pYV"/>
</dbReference>
<dbReference type="InterPro" id="IPR009510">
    <property type="entry name" value="T3SS_K"/>
</dbReference>
<dbReference type="Pfam" id="PF06578">
    <property type="entry name" value="YscK"/>
    <property type="match status" value="1"/>
</dbReference>
<gene>
    <name type="primary">yscK</name>
    <name type="synonym">lcrKB</name>
    <name type="ordered locus">pYV0087</name>
</gene>
<comment type="function">
    <text>Belongs to an operon involved in the translocation of Yop proteins across the bacterial membranes or in the specific control of this function.</text>
</comment>
<comment type="induction">
    <text>At 37 degrees Celsius in the absence of calcium.</text>
</comment>
<comment type="sequence caution" evidence="1">
    <conflict type="erroneous initiation">
        <sequence resource="EMBL-CDS" id="CAF25430"/>
    </conflict>
</comment>
<sequence length="209" mass="23991">MMENYITSFQLRFCPAAYLHLEQLPSLWRSILPYLPQWRDSAHLNAALLDEFSLDTDYEEPHGLGALPLQPQSQLELLLCRLGLVLHGEAIRRCVLASPLQQLLTLVNQETLRQIIVQHELLIGPWPTHWQRPLPTEIESRTMIQSGLAFWLAAMEPQPQAWCKRLSLRLPLATPSEPWLVAESQRPLAQTLCHKLVKQVTPTCSHLFK</sequence>
<geneLocation type="plasmid">
    <name>pIB1</name>
</geneLocation>
<geneLocation type="plasmid">
    <name>pYV</name>
</geneLocation>
<feature type="chain" id="PRO_0000066491" description="Yop proteins translocation protein K">
    <location>
        <begin position="1"/>
        <end position="209"/>
    </location>
</feature>
<keyword id="KW-0614">Plasmid</keyword>
<keyword id="KW-0843">Virulence</keyword>
<organism>
    <name type="scientific">Yersinia pseudotuberculosis serotype I (strain IP32953)</name>
    <dbReference type="NCBI Taxonomy" id="273123"/>
    <lineage>
        <taxon>Bacteria</taxon>
        <taxon>Pseudomonadati</taxon>
        <taxon>Pseudomonadota</taxon>
        <taxon>Gammaproteobacteria</taxon>
        <taxon>Enterobacterales</taxon>
        <taxon>Yersiniaceae</taxon>
        <taxon>Yersinia</taxon>
    </lineage>
</organism>
<reference key="1">
    <citation type="journal article" date="1992" name="J. Bacteriol.">
        <title>A novel protein, LcrQ, involved in the low-calcium response of Yersinia pseudotuberculosis shows extensive homology to YopH.</title>
        <authorList>
            <person name="Rimpilaeinen M."/>
            <person name="Forsberg A."/>
            <person name="Wolf-Watz H."/>
        </authorList>
    </citation>
    <scope>NUCLEOTIDE SEQUENCE [GENOMIC DNA]</scope>
    <source>
        <strain>YPIII / Serotype O:3</strain>
        <plasmid>pIB1</plasmid>
    </source>
</reference>
<reference key="2">
    <citation type="journal article" date="2004" name="Proc. Natl. Acad. Sci. U.S.A.">
        <title>Insights into the evolution of Yersinia pestis through whole-genome comparison with Yersinia pseudotuberculosis.</title>
        <authorList>
            <person name="Chain P.S.G."/>
            <person name="Carniel E."/>
            <person name="Larimer F.W."/>
            <person name="Lamerdin J."/>
            <person name="Stoutland P.O."/>
            <person name="Regala W.M."/>
            <person name="Georgescu A.M."/>
            <person name="Vergez L.M."/>
            <person name="Land M.L."/>
            <person name="Motin V.L."/>
            <person name="Brubaker R.R."/>
            <person name="Fowler J."/>
            <person name="Hinnebusch J."/>
            <person name="Marceau M."/>
            <person name="Medigue C."/>
            <person name="Simonet M."/>
            <person name="Chenal-Francisque V."/>
            <person name="Souza B."/>
            <person name="Dacheux D."/>
            <person name="Elliott J.M."/>
            <person name="Derbise A."/>
            <person name="Hauser L.J."/>
            <person name="Garcia E."/>
        </authorList>
    </citation>
    <scope>NUCLEOTIDE SEQUENCE [LARGE SCALE GENOMIC DNA]</scope>
    <source>
        <strain>IP32953</strain>
        <plasmid>pYV</plasmid>
    </source>
</reference>
<name>YSCK_YERPS</name>
<evidence type="ECO:0000305" key="1"/>
<proteinExistence type="evidence at transcript level"/>